<organism>
    <name type="scientific">Dictyostelium discoideum</name>
    <name type="common">Social amoeba</name>
    <dbReference type="NCBI Taxonomy" id="44689"/>
    <lineage>
        <taxon>Eukaryota</taxon>
        <taxon>Amoebozoa</taxon>
        <taxon>Evosea</taxon>
        <taxon>Eumycetozoa</taxon>
        <taxon>Dictyostelia</taxon>
        <taxon>Dictyosteliales</taxon>
        <taxon>Dictyosteliaceae</taxon>
        <taxon>Dictyostelium</taxon>
    </lineage>
</organism>
<proteinExistence type="inferred from homology"/>
<accession>Q54P46</accession>
<protein>
    <recommendedName>
        <fullName>NADH dehydrogenase [ubiquinone] 1 alpha subcomplex subunit 8</fullName>
    </recommendedName>
</protein>
<keyword id="KW-1015">Disulfide bond</keyword>
<keyword id="KW-0249">Electron transport</keyword>
<keyword id="KW-0472">Membrane</keyword>
<keyword id="KW-0496">Mitochondrion</keyword>
<keyword id="KW-0999">Mitochondrion inner membrane</keyword>
<keyword id="KW-1185">Reference proteome</keyword>
<keyword id="KW-0677">Repeat</keyword>
<keyword id="KW-0679">Respiratory chain</keyword>
<keyword id="KW-0813">Transport</keyword>
<comment type="function">
    <text evidence="1">Accessory subunit of the mitochondrial membrane respiratory chain NADH dehydrogenase (Complex I), that is believed not to be involved in catalysis. Complex I functions in the transfer of electrons from NADH to the respiratory chain. The immediate electron acceptor for the enzyme is believed to be ubiquinone (By similarity).</text>
</comment>
<comment type="subunit">
    <text evidence="1">Complex I is composed of about 45 different subunits.</text>
</comment>
<comment type="subcellular location">
    <subcellularLocation>
        <location evidence="2">Mitochondrion inner membrane</location>
        <topology evidence="2">Peripheral membrane protein</topology>
    </subcellularLocation>
    <subcellularLocation>
        <location evidence="2">Mitochondrion intermembrane space</location>
    </subcellularLocation>
</comment>
<comment type="similarity">
    <text evidence="4">Belongs to the complex I NDUFA8 subunit family.</text>
</comment>
<feature type="chain" id="PRO_0000327800" description="NADH dehydrogenase [ubiquinone] 1 alpha subcomplex subunit 8">
    <location>
        <begin position="1"/>
        <end position="104"/>
    </location>
</feature>
<feature type="domain" description="CHCH 1" evidence="3">
    <location>
        <begin position="17"/>
        <end position="59"/>
    </location>
</feature>
<feature type="domain" description="CHCH 2" evidence="3">
    <location>
        <begin position="60"/>
        <end position="102"/>
    </location>
</feature>
<feature type="short sequence motif" description="Cx9C motif 1" evidence="3">
    <location>
        <begin position="20"/>
        <end position="30"/>
    </location>
</feature>
<feature type="short sequence motif" description="Cx9C motif 2" evidence="3">
    <location>
        <begin position="41"/>
        <end position="51"/>
    </location>
</feature>
<feature type="short sequence motif" description="Cx9C motif 3" evidence="3">
    <location>
        <begin position="63"/>
        <end position="73"/>
    </location>
</feature>
<feature type="short sequence motif" description="Cx9C motif 4" evidence="3">
    <location>
        <begin position="84"/>
        <end position="94"/>
    </location>
</feature>
<feature type="disulfide bond" evidence="3">
    <location>
        <begin position="20"/>
        <end position="51"/>
    </location>
</feature>
<feature type="disulfide bond" evidence="3">
    <location>
        <begin position="30"/>
        <end position="41"/>
    </location>
</feature>
<feature type="disulfide bond" evidence="3">
    <location>
        <begin position="63"/>
        <end position="94"/>
    </location>
</feature>
<feature type="disulfide bond" evidence="3">
    <location>
        <begin position="73"/>
        <end position="84"/>
    </location>
</feature>
<gene>
    <name type="primary">ndufa8</name>
    <name type="ORF">DDB_G0284799</name>
</gene>
<evidence type="ECO:0000250" key="1"/>
<evidence type="ECO:0000250" key="2">
    <source>
        <dbReference type="UniProtKB" id="P51970"/>
    </source>
</evidence>
<evidence type="ECO:0000255" key="3">
    <source>
        <dbReference type="PROSITE-ProRule" id="PRU01150"/>
    </source>
</evidence>
<evidence type="ECO:0000305" key="4"/>
<dbReference type="EMBL" id="AAFI02000071">
    <property type="protein sequence ID" value="EAL65052.1"/>
    <property type="molecule type" value="Genomic_DNA"/>
</dbReference>
<dbReference type="RefSeq" id="XP_638412.1">
    <property type="nucleotide sequence ID" value="XM_633320.1"/>
</dbReference>
<dbReference type="SMR" id="Q54P46"/>
<dbReference type="FunCoup" id="Q54P46">
    <property type="interactions" value="7"/>
</dbReference>
<dbReference type="STRING" id="44689.Q54P46"/>
<dbReference type="PaxDb" id="44689-DDB0233242"/>
<dbReference type="EnsemblProtists" id="EAL65052">
    <property type="protein sequence ID" value="EAL65052"/>
    <property type="gene ID" value="DDB_G0284799"/>
</dbReference>
<dbReference type="GeneID" id="8624782"/>
<dbReference type="KEGG" id="ddi:DDB_G0284799"/>
<dbReference type="dictyBase" id="DDB_G0284799">
    <property type="gene designation" value="ndufa8"/>
</dbReference>
<dbReference type="VEuPathDB" id="AmoebaDB:DDB_G0284799"/>
<dbReference type="eggNOG" id="ENOG502RIA4">
    <property type="taxonomic scope" value="Eukaryota"/>
</dbReference>
<dbReference type="HOGENOM" id="CLU_2255242_0_0_1"/>
<dbReference type="InParanoid" id="Q54P46"/>
<dbReference type="OMA" id="GCTQKIM"/>
<dbReference type="PhylomeDB" id="Q54P46"/>
<dbReference type="PRO" id="PR:Q54P46"/>
<dbReference type="Proteomes" id="UP000002195">
    <property type="component" value="Chromosome 4"/>
</dbReference>
<dbReference type="GO" id="GO:0005743">
    <property type="term" value="C:mitochondrial inner membrane"/>
    <property type="evidence" value="ECO:0000250"/>
    <property type="project" value="dictyBase"/>
</dbReference>
<dbReference type="GO" id="GO:0005758">
    <property type="term" value="C:mitochondrial intermembrane space"/>
    <property type="evidence" value="ECO:0007669"/>
    <property type="project" value="UniProtKB-SubCell"/>
</dbReference>
<dbReference type="GO" id="GO:0045271">
    <property type="term" value="C:respiratory chain complex I"/>
    <property type="evidence" value="ECO:0000250"/>
    <property type="project" value="UniProtKB"/>
</dbReference>
<dbReference type="GO" id="GO:0006120">
    <property type="term" value="P:mitochondrial electron transport, NADH to ubiquinone"/>
    <property type="evidence" value="ECO:0007669"/>
    <property type="project" value="InterPro"/>
</dbReference>
<dbReference type="GO" id="GO:0045892">
    <property type="term" value="P:negative regulation of DNA-templated transcription"/>
    <property type="evidence" value="ECO:0000250"/>
    <property type="project" value="UniProtKB"/>
</dbReference>
<dbReference type="InterPro" id="IPR036179">
    <property type="entry name" value="Ig-like_dom_sf"/>
</dbReference>
<dbReference type="InterPro" id="IPR016680">
    <property type="entry name" value="NDUFA8"/>
</dbReference>
<dbReference type="PANTHER" id="PTHR13344:SF0">
    <property type="entry name" value="NADH DEHYDROGENASE [UBIQUINONE] 1 ALPHA SUBCOMPLEX SUBUNIT 8"/>
    <property type="match status" value="1"/>
</dbReference>
<dbReference type="PANTHER" id="PTHR13344">
    <property type="entry name" value="NADH-UBIQUINONE OXIDOREDUCTASE"/>
    <property type="match status" value="1"/>
</dbReference>
<dbReference type="SUPFAM" id="SSF48726">
    <property type="entry name" value="Immunoglobulin"/>
    <property type="match status" value="1"/>
</dbReference>
<dbReference type="PROSITE" id="PS51808">
    <property type="entry name" value="CHCH"/>
    <property type="match status" value="2"/>
</dbReference>
<reference key="1">
    <citation type="journal article" date="2005" name="Nature">
        <title>The genome of the social amoeba Dictyostelium discoideum.</title>
        <authorList>
            <person name="Eichinger L."/>
            <person name="Pachebat J.A."/>
            <person name="Gloeckner G."/>
            <person name="Rajandream M.A."/>
            <person name="Sucgang R."/>
            <person name="Berriman M."/>
            <person name="Song J."/>
            <person name="Olsen R."/>
            <person name="Szafranski K."/>
            <person name="Xu Q."/>
            <person name="Tunggal B."/>
            <person name="Kummerfeld S."/>
            <person name="Madera M."/>
            <person name="Konfortov B.A."/>
            <person name="Rivero F."/>
            <person name="Bankier A.T."/>
            <person name="Lehmann R."/>
            <person name="Hamlin N."/>
            <person name="Davies R."/>
            <person name="Gaudet P."/>
            <person name="Fey P."/>
            <person name="Pilcher K."/>
            <person name="Chen G."/>
            <person name="Saunders D."/>
            <person name="Sodergren E.J."/>
            <person name="Davis P."/>
            <person name="Kerhornou A."/>
            <person name="Nie X."/>
            <person name="Hall N."/>
            <person name="Anjard C."/>
            <person name="Hemphill L."/>
            <person name="Bason N."/>
            <person name="Farbrother P."/>
            <person name="Desany B."/>
            <person name="Just E."/>
            <person name="Morio T."/>
            <person name="Rost R."/>
            <person name="Churcher C.M."/>
            <person name="Cooper J."/>
            <person name="Haydock S."/>
            <person name="van Driessche N."/>
            <person name="Cronin A."/>
            <person name="Goodhead I."/>
            <person name="Muzny D.M."/>
            <person name="Mourier T."/>
            <person name="Pain A."/>
            <person name="Lu M."/>
            <person name="Harper D."/>
            <person name="Lindsay R."/>
            <person name="Hauser H."/>
            <person name="James K.D."/>
            <person name="Quiles M."/>
            <person name="Madan Babu M."/>
            <person name="Saito T."/>
            <person name="Buchrieser C."/>
            <person name="Wardroper A."/>
            <person name="Felder M."/>
            <person name="Thangavelu M."/>
            <person name="Johnson D."/>
            <person name="Knights A."/>
            <person name="Loulseged H."/>
            <person name="Mungall K.L."/>
            <person name="Oliver K."/>
            <person name="Price C."/>
            <person name="Quail M.A."/>
            <person name="Urushihara H."/>
            <person name="Hernandez J."/>
            <person name="Rabbinowitsch E."/>
            <person name="Steffen D."/>
            <person name="Sanders M."/>
            <person name="Ma J."/>
            <person name="Kohara Y."/>
            <person name="Sharp S."/>
            <person name="Simmonds M.N."/>
            <person name="Spiegler S."/>
            <person name="Tivey A."/>
            <person name="Sugano S."/>
            <person name="White B."/>
            <person name="Walker D."/>
            <person name="Woodward J.R."/>
            <person name="Winckler T."/>
            <person name="Tanaka Y."/>
            <person name="Shaulsky G."/>
            <person name="Schleicher M."/>
            <person name="Weinstock G.M."/>
            <person name="Rosenthal A."/>
            <person name="Cox E.C."/>
            <person name="Chisholm R.L."/>
            <person name="Gibbs R.A."/>
            <person name="Loomis W.F."/>
            <person name="Platzer M."/>
            <person name="Kay R.R."/>
            <person name="Williams J.G."/>
            <person name="Dear P.H."/>
            <person name="Noegel A.A."/>
            <person name="Barrell B.G."/>
            <person name="Kuspa A."/>
        </authorList>
    </citation>
    <scope>NUCLEOTIDE SEQUENCE [LARGE SCALE GENOMIC DNA]</scope>
    <source>
        <strain>AX4</strain>
    </source>
</reference>
<name>NDUA8_DICDI</name>
<sequence>MESFTRAELVAQRDGVWAVCGEVFEAYEKCRMEKGSDPELCLRESTAVVGCSQKVMREIVKNCQKELNESVKCIEENNMRTIPCEEENKAFNECFDKLVAPKFL</sequence>